<dbReference type="EMBL" id="AP005647">
    <property type="protein sequence ID" value="BAD10525.1"/>
    <property type="molecule type" value="Genomic_DNA"/>
</dbReference>
<dbReference type="EMBL" id="AP008208">
    <property type="protein sequence ID" value="BAF07747.1"/>
    <property type="molecule type" value="Genomic_DNA"/>
</dbReference>
<dbReference type="EMBL" id="AP014958">
    <property type="protein sequence ID" value="BAS76884.1"/>
    <property type="molecule type" value="Genomic_DNA"/>
</dbReference>
<dbReference type="EMBL" id="AK060530">
    <property type="status" value="NOT_ANNOTATED_CDS"/>
    <property type="molecule type" value="mRNA"/>
</dbReference>
<dbReference type="RefSeq" id="XP_015623100.1">
    <property type="nucleotide sequence ID" value="XM_015767614.1"/>
</dbReference>
<dbReference type="SMR" id="Q6YXX9"/>
<dbReference type="FunCoup" id="Q6YXX9">
    <property type="interactions" value="6"/>
</dbReference>
<dbReference type="IntAct" id="Q6YXX9">
    <property type="interactions" value="1"/>
</dbReference>
<dbReference type="STRING" id="39947.Q6YXX9"/>
<dbReference type="PaxDb" id="39947-Q6YXX9"/>
<dbReference type="EnsemblPlants" id="Os02t0137800-01">
    <molecule id="Q6YXX9-1"/>
    <property type="protein sequence ID" value="Os02t0137800-01"/>
    <property type="gene ID" value="Os02g0137800"/>
</dbReference>
<dbReference type="Gramene" id="Os02t0137800-01">
    <molecule id="Q6YXX9-1"/>
    <property type="protein sequence ID" value="Os02t0137800-01"/>
    <property type="gene ID" value="Os02g0137800"/>
</dbReference>
<dbReference type="KEGG" id="dosa:Os02g0137800"/>
<dbReference type="eggNOG" id="ENOG502S66K">
    <property type="taxonomic scope" value="Eukaryota"/>
</dbReference>
<dbReference type="HOGENOM" id="CLU_105699_0_0_1"/>
<dbReference type="InParanoid" id="Q6YXX9"/>
<dbReference type="OMA" id="RGEDQEH"/>
<dbReference type="OrthoDB" id="10299082at2759"/>
<dbReference type="Proteomes" id="UP000000763">
    <property type="component" value="Chromosome 2"/>
</dbReference>
<dbReference type="Proteomes" id="UP000059680">
    <property type="component" value="Chromosome 2"/>
</dbReference>
<dbReference type="ExpressionAtlas" id="Q6YXX9">
    <property type="expression patterns" value="baseline and differential"/>
</dbReference>
<dbReference type="GO" id="GO:0005886">
    <property type="term" value="C:plasma membrane"/>
    <property type="evidence" value="ECO:0000314"/>
    <property type="project" value="UniProtKB"/>
</dbReference>
<dbReference type="GO" id="GO:0007186">
    <property type="term" value="P:G protein-coupled receptor signaling pathway"/>
    <property type="evidence" value="ECO:0007669"/>
    <property type="project" value="InterPro"/>
</dbReference>
<dbReference type="InterPro" id="IPR015898">
    <property type="entry name" value="G-protein_gamma-like_dom"/>
</dbReference>
<dbReference type="InterPro" id="IPR045878">
    <property type="entry name" value="GG1/2"/>
</dbReference>
<dbReference type="PANTHER" id="PTHR35129">
    <property type="entry name" value="GUANINE NUCLEOTIDE-BINDING PROTEIN SUBUNIT GAMMA 1"/>
    <property type="match status" value="1"/>
</dbReference>
<dbReference type="PANTHER" id="PTHR35129:SF5">
    <property type="entry name" value="GUANINE NUCLEOTIDE-BINDING PROTEIN SUBUNIT GAMMA 2"/>
    <property type="match status" value="1"/>
</dbReference>
<dbReference type="Pfam" id="PF00631">
    <property type="entry name" value="G-gamma"/>
    <property type="match status" value="1"/>
</dbReference>
<dbReference type="SMART" id="SM01224">
    <property type="entry name" value="G_gamma"/>
    <property type="match status" value="1"/>
</dbReference>
<comment type="function">
    <text evidence="6">Guanine nucleotide-binding proteins (G proteins) are involved as modulators or transducers in various transmembrane signaling systems.</text>
</comment>
<comment type="subunit">
    <text evidence="4">G proteins are composed of 3 units, alpha, beta and gamma. Interacts with the beta subunit RGB1.</text>
</comment>
<comment type="interaction">
    <interactant intactId="EBI-1100089">
        <id>Q6YXX9</id>
    </interactant>
    <interactant intactId="EBI-1100119">
        <id>Q40687</id>
        <label>RGB1</label>
    </interactant>
    <organismsDiffer>false</organismsDiffer>
    <experiments>4</experiments>
</comment>
<comment type="subcellular location">
    <subcellularLocation>
        <location evidence="4">Cell membrane</location>
    </subcellularLocation>
</comment>
<comment type="alternative products">
    <event type="alternative splicing"/>
    <isoform>
        <id>Q6YXX9-1</id>
        <name>1</name>
        <sequence type="displayed"/>
    </isoform>
    <text evidence="6">A number of isoforms are produced. According to EST sequences.</text>
</comment>
<accession>Q6YXX9</accession>
<accession>A0A0P0VEK9</accession>
<sequence>MRGEANGEEEQQPPRRNHLRDDAEEEEEVERRAARPVSGQQQQQQRRRPTDVGGGAAMRSVGYVGKHRLSAAIARLDQELQSLQDELNELETMEPASAACQGVITSTEGKSDPLLPVTIGPENASWERWFQRVRSSRSNKWWASKGSDFS</sequence>
<evidence type="ECO:0000255" key="1"/>
<evidence type="ECO:0000255" key="2">
    <source>
        <dbReference type="PROSITE-ProRule" id="PRU00592"/>
    </source>
</evidence>
<evidence type="ECO:0000256" key="3">
    <source>
        <dbReference type="SAM" id="MobiDB-lite"/>
    </source>
</evidence>
<evidence type="ECO:0000269" key="4">
    <source>
    </source>
</evidence>
<evidence type="ECO:0000303" key="5">
    <source>
    </source>
</evidence>
<evidence type="ECO:0000305" key="6"/>
<evidence type="ECO:0000312" key="7">
    <source>
        <dbReference type="EMBL" id="BAD10525.1"/>
    </source>
</evidence>
<evidence type="ECO:0000312" key="8">
    <source>
        <dbReference type="EMBL" id="BAF07747.1"/>
    </source>
</evidence>
<gene>
    <name evidence="5" type="primary">RGG2</name>
    <name evidence="8" type="ordered locus">Os02g0137800</name>
    <name evidence="6" type="ordered locus">LOC_Os02g04520</name>
    <name evidence="7" type="ORF">OSJNBa0026E05.11-1</name>
</gene>
<reference key="1">
    <citation type="journal article" date="2005" name="Nature">
        <title>The map-based sequence of the rice genome.</title>
        <authorList>
            <consortium name="International rice genome sequencing project (IRGSP)"/>
        </authorList>
    </citation>
    <scope>NUCLEOTIDE SEQUENCE [LARGE SCALE GENOMIC DNA]</scope>
    <source>
        <strain>cv. Nipponbare</strain>
    </source>
</reference>
<reference key="2">
    <citation type="journal article" date="2008" name="Nucleic Acids Res.">
        <title>The rice annotation project database (RAP-DB): 2008 update.</title>
        <authorList>
            <consortium name="The rice annotation project (RAP)"/>
        </authorList>
    </citation>
    <scope>GENOME REANNOTATION</scope>
    <source>
        <strain>cv. Nipponbare</strain>
    </source>
</reference>
<reference key="3">
    <citation type="journal article" date="2013" name="Rice">
        <title>Improvement of the Oryza sativa Nipponbare reference genome using next generation sequence and optical map data.</title>
        <authorList>
            <person name="Kawahara Y."/>
            <person name="de la Bastide M."/>
            <person name="Hamilton J.P."/>
            <person name="Kanamori H."/>
            <person name="McCombie W.R."/>
            <person name="Ouyang S."/>
            <person name="Schwartz D.C."/>
            <person name="Tanaka T."/>
            <person name="Wu J."/>
            <person name="Zhou S."/>
            <person name="Childs K.L."/>
            <person name="Davidson R.M."/>
            <person name="Lin H."/>
            <person name="Quesada-Ocampo L."/>
            <person name="Vaillancourt B."/>
            <person name="Sakai H."/>
            <person name="Lee S.S."/>
            <person name="Kim J."/>
            <person name="Numa H."/>
            <person name="Itoh T."/>
            <person name="Buell C.R."/>
            <person name="Matsumoto T."/>
        </authorList>
    </citation>
    <scope>GENOME REANNOTATION</scope>
    <source>
        <strain>cv. Nipponbare</strain>
    </source>
</reference>
<reference key="4">
    <citation type="journal article" date="2003" name="Science">
        <title>Collection, mapping, and annotation of over 28,000 cDNA clones from japonica rice.</title>
        <authorList>
            <consortium name="The rice full-length cDNA consortium"/>
        </authorList>
    </citation>
    <scope>NUCLEOTIDE SEQUENCE [LARGE SCALE MRNA]</scope>
    <source>
        <strain>cv. Nipponbare</strain>
    </source>
</reference>
<reference key="5">
    <citation type="journal article" date="2004" name="Plant J.">
        <title>Characterization of heterotrimeric G protein complexes in rice plasma membrane.</title>
        <authorList>
            <person name="Kato C."/>
            <person name="Mizutani T."/>
            <person name="Tamaki H."/>
            <person name="Kumagai H."/>
            <person name="Kamiya T."/>
            <person name="Hirobe A."/>
            <person name="Fujisawa Y."/>
            <person name="Kato H."/>
            <person name="Iwasaki Y."/>
        </authorList>
    </citation>
    <scope>SUBUNIT</scope>
    <scope>INTERACTION WITH RGB1</scope>
    <scope>SUBCELLULAR LOCATION</scope>
</reference>
<name>GG2_ORYSJ</name>
<organism>
    <name type="scientific">Oryza sativa subsp. japonica</name>
    <name type="common">Rice</name>
    <dbReference type="NCBI Taxonomy" id="39947"/>
    <lineage>
        <taxon>Eukaryota</taxon>
        <taxon>Viridiplantae</taxon>
        <taxon>Streptophyta</taxon>
        <taxon>Embryophyta</taxon>
        <taxon>Tracheophyta</taxon>
        <taxon>Spermatophyta</taxon>
        <taxon>Magnoliopsida</taxon>
        <taxon>Liliopsida</taxon>
        <taxon>Poales</taxon>
        <taxon>Poaceae</taxon>
        <taxon>BOP clade</taxon>
        <taxon>Oryzoideae</taxon>
        <taxon>Oryzeae</taxon>
        <taxon>Oryzinae</taxon>
        <taxon>Oryza</taxon>
        <taxon>Oryza sativa</taxon>
    </lineage>
</organism>
<proteinExistence type="evidence at protein level"/>
<keyword id="KW-0025">Alternative splicing</keyword>
<keyword id="KW-1003">Cell membrane</keyword>
<keyword id="KW-0175">Coiled coil</keyword>
<keyword id="KW-0472">Membrane</keyword>
<keyword id="KW-1185">Reference proteome</keyword>
<keyword id="KW-0807">Transducer</keyword>
<feature type="chain" id="PRO_0000432813" description="Guanine nucleotide-binding protein subunit gamma 2">
    <location>
        <begin position="1"/>
        <end position="150"/>
    </location>
</feature>
<feature type="domain" description="G protein gamma" evidence="2">
    <location>
        <begin position="71"/>
        <end position="137"/>
    </location>
</feature>
<feature type="region of interest" description="Disordered" evidence="3">
    <location>
        <begin position="1"/>
        <end position="59"/>
    </location>
</feature>
<feature type="coiled-coil region" evidence="1">
    <location>
        <begin position="65"/>
        <end position="97"/>
    </location>
</feature>
<feature type="compositionally biased region" description="Acidic residues" evidence="3">
    <location>
        <begin position="1"/>
        <end position="11"/>
    </location>
</feature>
<feature type="sequence conflict" description="In Ref. 4; AK060530." evidence="6" ref="4">
    <original>R</original>
    <variation>C</variation>
    <location>
        <position position="137"/>
    </location>
</feature>
<feature type="sequence conflict" description="In Ref. 4; AK060530." evidence="6" ref="4">
    <original>S</original>
    <variation>P</variation>
    <location>
        <position position="150"/>
    </location>
</feature>
<protein>
    <recommendedName>
        <fullName evidence="6">Guanine nucleotide-binding protein subunit gamma 2</fullName>
    </recommendedName>
    <alternativeName>
        <fullName evidence="6">Ggamma-subunit 2</fullName>
    </alternativeName>
    <alternativeName>
        <fullName evidence="6">Heterotrimeric G protein gamma-subunit 2</fullName>
    </alternativeName>
</protein>